<comment type="function">
    <text evidence="2 4 5 7">Involved in peptidoglycan biosynthesis. Transports lipid-linked peptidoglycan precursors from the inner to the outer leaflet of the cytoplasmic membrane.</text>
</comment>
<comment type="pathway">
    <text evidence="2 7">Cell wall biogenesis; peptidoglycan biosynthesis.</text>
</comment>
<comment type="subcellular location">
    <subcellularLocation>
        <location evidence="2 3 6">Cell inner membrane</location>
        <topology evidence="2 3 6">Multi-pass membrane protein</topology>
    </subcellularLocation>
</comment>
<comment type="miscellaneous">
    <text>FtsW (AC P0ABG4) is also proposed to act as a lipid II flippase. The identity of the lipid II flippase is controversial with conflicting in vivo and in vitro results.</text>
</comment>
<comment type="similarity">
    <text evidence="2 9">Belongs to the MurJ/MviN family.</text>
</comment>
<organism>
    <name type="scientific">Escherichia coli (strain K12)</name>
    <dbReference type="NCBI Taxonomy" id="83333"/>
    <lineage>
        <taxon>Bacteria</taxon>
        <taxon>Pseudomonadati</taxon>
        <taxon>Pseudomonadota</taxon>
        <taxon>Gammaproteobacteria</taxon>
        <taxon>Enterobacterales</taxon>
        <taxon>Enterobacteriaceae</taxon>
        <taxon>Escherichia</taxon>
    </lineage>
</organism>
<reference key="1">
    <citation type="journal article" date="1996" name="DNA Res.">
        <title>A 718-kb DNA sequence of the Escherichia coli K-12 genome corresponding to the 12.7-28.0 min region on the linkage map.</title>
        <authorList>
            <person name="Oshima T."/>
            <person name="Aiba H."/>
            <person name="Baba T."/>
            <person name="Fujita K."/>
            <person name="Hayashi K."/>
            <person name="Honjo A."/>
            <person name="Ikemoto K."/>
            <person name="Inada T."/>
            <person name="Itoh T."/>
            <person name="Kajihara M."/>
            <person name="Kanai K."/>
            <person name="Kashimoto K."/>
            <person name="Kimura S."/>
            <person name="Kitagawa M."/>
            <person name="Makino K."/>
            <person name="Masuda S."/>
            <person name="Miki T."/>
            <person name="Mizobuchi K."/>
            <person name="Mori H."/>
            <person name="Motomura K."/>
            <person name="Nakamura Y."/>
            <person name="Nashimoto H."/>
            <person name="Nishio Y."/>
            <person name="Saito N."/>
            <person name="Sampei G."/>
            <person name="Seki Y."/>
            <person name="Tagami H."/>
            <person name="Takemoto K."/>
            <person name="Wada C."/>
            <person name="Yamamoto Y."/>
            <person name="Yano M."/>
            <person name="Horiuchi T."/>
        </authorList>
    </citation>
    <scope>NUCLEOTIDE SEQUENCE [LARGE SCALE GENOMIC DNA]</scope>
    <source>
        <strain>K12 / W3110 / ATCC 27325 / DSM 5911</strain>
    </source>
</reference>
<reference key="2">
    <citation type="journal article" date="1997" name="Science">
        <title>The complete genome sequence of Escherichia coli K-12.</title>
        <authorList>
            <person name="Blattner F.R."/>
            <person name="Plunkett G. III"/>
            <person name="Bloch C.A."/>
            <person name="Perna N.T."/>
            <person name="Burland V."/>
            <person name="Riley M."/>
            <person name="Collado-Vides J."/>
            <person name="Glasner J.D."/>
            <person name="Rode C.K."/>
            <person name="Mayhew G.F."/>
            <person name="Gregor J."/>
            <person name="Davis N.W."/>
            <person name="Kirkpatrick H.A."/>
            <person name="Goeden M.A."/>
            <person name="Rose D.J."/>
            <person name="Mau B."/>
            <person name="Shao Y."/>
        </authorList>
    </citation>
    <scope>NUCLEOTIDE SEQUENCE [LARGE SCALE GENOMIC DNA]</scope>
    <source>
        <strain>K12 / MG1655 / ATCC 47076</strain>
    </source>
</reference>
<reference key="3">
    <citation type="journal article" date="2006" name="Mol. Syst. Biol.">
        <title>Highly accurate genome sequences of Escherichia coli K-12 strains MG1655 and W3110.</title>
        <authorList>
            <person name="Hayashi K."/>
            <person name="Morooka N."/>
            <person name="Yamamoto Y."/>
            <person name="Fujita K."/>
            <person name="Isono K."/>
            <person name="Choi S."/>
            <person name="Ohtsubo E."/>
            <person name="Baba T."/>
            <person name="Wanner B.L."/>
            <person name="Mori H."/>
            <person name="Horiuchi T."/>
        </authorList>
    </citation>
    <scope>NUCLEOTIDE SEQUENCE [LARGE SCALE GENOMIC DNA]</scope>
    <source>
        <strain>K12 / W3110 / ATCC 27325 / DSM 5911</strain>
    </source>
</reference>
<reference key="4">
    <citation type="journal article" date="2005" name="Science">
        <title>Global topology analysis of the Escherichia coli inner membrane proteome.</title>
        <authorList>
            <person name="Daley D.O."/>
            <person name="Rapp M."/>
            <person name="Granseth E."/>
            <person name="Melen K."/>
            <person name="Drew D."/>
            <person name="von Heijne G."/>
        </authorList>
    </citation>
    <scope>SUBCELLULAR LOCATION</scope>
    <source>
        <strain>K12 / MG1655 / ATCC 47076</strain>
    </source>
</reference>
<reference key="5">
    <citation type="journal article" date="2008" name="J. Bacteriol.">
        <title>Involvement of an essential gene, mviN, in murein synthesis in Escherichia coli.</title>
        <authorList>
            <person name="Inoue A."/>
            <person name="Murata Y."/>
            <person name="Takahashi H."/>
            <person name="Tsuji N."/>
            <person name="Fujisaki S."/>
            <person name="Kato J."/>
        </authorList>
    </citation>
    <scope>FUNCTION IN PEPTIDOGLYCAN BIOSYNTHESIS</scope>
</reference>
<reference key="6">
    <citation type="journal article" date="2008" name="Proc. Natl. Acad. Sci. U.S.A.">
        <title>Bioinformatics identification of MurJ (MviN) as the peptidoglycan lipid II flippase in Escherichia coli.</title>
        <authorList>
            <person name="Ruiz N."/>
        </authorList>
    </citation>
    <scope>FUNCTION IN PEPTIDOGLYCAN BIOSYNTHESIS</scope>
    <scope>PROBABLE FUNCTION IN LIPID II TRANSLOCATION</scope>
    <scope>GENE NAME</scope>
    <source>
        <strain>K12 / MC4100 / ATCC 35695 / DSM 6574</strain>
    </source>
</reference>
<reference key="7">
    <citation type="journal article" date="2013" name="J. Bacteriol.">
        <title>Structure-function analysis of MurJ reveals a solvent-exposed cavity containing residues essential for peptidoglycan biogenesis in Escherichia coli.</title>
        <authorList>
            <person name="Butler E.K."/>
            <person name="Davis R.M."/>
            <person name="Bari V."/>
            <person name="Nicholson P.A."/>
            <person name="Ruiz N."/>
        </authorList>
    </citation>
    <scope>PROBABLE FUNCTION AS A TRANSPORTER</scope>
    <scope>SUBCELLULAR LOCATION</scope>
    <scope>TOPOLOGY</scope>
    <scope>MUTAGENESIS OF ARG-18; ARG-24; ASP-39; ARG-52 AND ARG-270</scope>
</reference>
<reference key="8">
    <citation type="journal article" date="2014" name="Science">
        <title>Bacterial cell wall. MurJ is the flippase of lipid-linked precursors for peptidoglycan biogenesis.</title>
        <authorList>
            <person name="Sham L.T."/>
            <person name="Butler E.K."/>
            <person name="Lebar M.D."/>
            <person name="Kahne D."/>
            <person name="Bernhardt T.G."/>
            <person name="Ruiz N."/>
        </authorList>
    </citation>
    <scope>FUNCTION AS A FLIPPASE</scope>
    <scope>PATHWAY</scope>
</reference>
<feature type="chain" id="PRO_0000182006" description="Lipid II flippase MurJ">
    <location>
        <begin position="1"/>
        <end position="511"/>
    </location>
</feature>
<feature type="topological domain" description="Cytoplasmic" evidence="1">
    <location>
        <begin position="1"/>
        <end position="5"/>
    </location>
</feature>
<feature type="transmembrane region" description="Helical" evidence="1">
    <location>
        <begin position="6"/>
        <end position="32"/>
    </location>
</feature>
<feature type="topological domain" description="Periplasmic" evidence="1">
    <location>
        <begin position="33"/>
        <end position="40"/>
    </location>
</feature>
<feature type="transmembrane region" description="Helical" evidence="1">
    <location>
        <begin position="41"/>
        <end position="69"/>
    </location>
</feature>
<feature type="topological domain" description="Cytoplasmic" evidence="1">
    <location>
        <begin position="70"/>
        <end position="82"/>
    </location>
</feature>
<feature type="transmembrane region" description="Helical" evidence="1">
    <location>
        <begin position="83"/>
        <end position="109"/>
    </location>
</feature>
<feature type="topological domain" description="Periplasmic" evidence="1">
    <location>
        <begin position="110"/>
        <end position="123"/>
    </location>
</feature>
<feature type="transmembrane region" description="Helical" evidence="1">
    <location>
        <begin position="124"/>
        <end position="154"/>
    </location>
</feature>
<feature type="topological domain" description="Cytoplasmic" evidence="1">
    <location>
        <begin position="155"/>
        <end position="156"/>
    </location>
</feature>
<feature type="transmembrane region" description="Helical" evidence="1">
    <location>
        <begin position="157"/>
        <end position="178"/>
    </location>
</feature>
<feature type="topological domain" description="Periplasmic" evidence="1">
    <location>
        <begin position="179"/>
        <end position="185"/>
    </location>
</feature>
<feature type="transmembrane region" description="Helical" evidence="1">
    <location>
        <begin position="186"/>
        <end position="207"/>
    </location>
</feature>
<feature type="topological domain" description="Cytoplasmic" evidence="1">
    <location>
        <begin position="208"/>
        <end position="223"/>
    </location>
</feature>
<feature type="transmembrane region" description="Helical" evidence="1">
    <location>
        <begin position="224"/>
        <end position="253"/>
    </location>
</feature>
<feature type="topological domain" description="Periplasmic" evidence="1">
    <location>
        <begin position="254"/>
        <end position="263"/>
    </location>
</feature>
<feature type="transmembrane region" description="Helical" evidence="1">
    <location>
        <begin position="264"/>
        <end position="292"/>
    </location>
</feature>
<feature type="topological domain" description="Cytoplasmic" evidence="1">
    <location>
        <begin position="293"/>
        <end position="302"/>
    </location>
</feature>
<feature type="transmembrane region" description="Helical" evidence="1">
    <location>
        <begin position="303"/>
        <end position="337"/>
    </location>
</feature>
<feature type="topological domain" description="Periplasmic" evidence="1">
    <location>
        <begin position="338"/>
        <end position="346"/>
    </location>
</feature>
<feature type="transmembrane region" description="Helical" evidence="1">
    <location>
        <begin position="347"/>
        <end position="374"/>
    </location>
</feature>
<feature type="topological domain" description="Cytoplasmic" evidence="1">
    <location>
        <begin position="375"/>
        <end position="379"/>
    </location>
</feature>
<feature type="transmembrane region" description="Helical" evidence="1">
    <location>
        <begin position="380"/>
        <end position="402"/>
    </location>
</feature>
<feature type="topological domain" description="Periplasmic" evidence="1">
    <location>
        <begin position="403"/>
        <end position="409"/>
    </location>
</feature>
<feature type="transmembrane region" description="Helical" evidence="1">
    <location>
        <begin position="410"/>
        <end position="429"/>
    </location>
</feature>
<feature type="topological domain" description="Cytoplasmic" evidence="1">
    <location>
        <begin position="430"/>
        <end position="443"/>
    </location>
</feature>
<feature type="transmembrane region" description="Helical" evidence="1">
    <location>
        <begin position="444"/>
        <end position="463"/>
    </location>
</feature>
<feature type="topological domain" description="Periplasmic" evidence="1">
    <location>
        <begin position="464"/>
        <end position="477"/>
    </location>
</feature>
<feature type="transmembrane region" description="Helical" evidence="1">
    <location>
        <begin position="478"/>
        <end position="499"/>
    </location>
</feature>
<feature type="topological domain" description="Cytoplasmic" evidence="1">
    <location>
        <begin position="500"/>
        <end position="511"/>
    </location>
</feature>
<feature type="mutagenesis site" description="Lack of activity." evidence="6">
    <original>R</original>
    <variation>A</variation>
    <variation>C</variation>
    <location>
        <position position="18"/>
    </location>
</feature>
<feature type="mutagenesis site" description="Lack of activity." evidence="6">
    <original>R</original>
    <variation>A</variation>
    <variation>C</variation>
    <location>
        <position position="24"/>
    </location>
</feature>
<feature type="mutagenesis site" description="Lack of activity." evidence="6">
    <original>D</original>
    <variation>A</variation>
    <variation>C</variation>
    <location>
        <position position="39"/>
    </location>
</feature>
<feature type="mutagenesis site" description="Decrease in activity." evidence="6">
    <original>R</original>
    <variation>A</variation>
    <location>
        <position position="52"/>
    </location>
</feature>
<feature type="mutagenesis site" description="Lack of activity." evidence="6">
    <original>R</original>
    <variation>C</variation>
    <location>
        <position position="52"/>
    </location>
</feature>
<feature type="mutagenesis site" description="Lack of activity." evidence="6">
    <original>R</original>
    <variation>A</variation>
    <variation>C</variation>
    <location>
        <position position="270"/>
    </location>
</feature>
<feature type="helix" evidence="10">
    <location>
        <begin position="3"/>
        <end position="6"/>
    </location>
</feature>
<feature type="helix" evidence="10">
    <location>
        <begin position="11"/>
        <end position="32"/>
    </location>
</feature>
<feature type="helix" evidence="10">
    <location>
        <begin position="36"/>
        <end position="44"/>
    </location>
</feature>
<feature type="helix" evidence="10">
    <location>
        <begin position="46"/>
        <end position="56"/>
    </location>
</feature>
<feature type="helix" evidence="10">
    <location>
        <begin position="59"/>
        <end position="73"/>
    </location>
</feature>
<feature type="helix" evidence="10">
    <location>
        <begin position="77"/>
        <end position="104"/>
    </location>
</feature>
<feature type="helix" evidence="10">
    <location>
        <begin position="106"/>
        <end position="113"/>
    </location>
</feature>
<feature type="helix" evidence="10">
    <location>
        <begin position="115"/>
        <end position="119"/>
    </location>
</feature>
<feature type="helix" evidence="10">
    <location>
        <begin position="121"/>
        <end position="134"/>
    </location>
</feature>
<feature type="helix" evidence="10">
    <location>
        <begin position="136"/>
        <end position="153"/>
    </location>
</feature>
<feature type="helix" evidence="10">
    <location>
        <begin position="158"/>
        <end position="162"/>
    </location>
</feature>
<feature type="helix" evidence="10">
    <location>
        <begin position="164"/>
        <end position="177"/>
    </location>
</feature>
<feature type="helix" evidence="10">
    <location>
        <begin position="179"/>
        <end position="181"/>
    </location>
</feature>
<feature type="strand" evidence="10">
    <location>
        <begin position="182"/>
        <end position="184"/>
    </location>
</feature>
<feature type="helix" evidence="10">
    <location>
        <begin position="187"/>
        <end position="202"/>
    </location>
</feature>
<feature type="helix" evidence="10">
    <location>
        <begin position="205"/>
        <end position="210"/>
    </location>
</feature>
<feature type="helix" evidence="10">
    <location>
        <begin position="224"/>
        <end position="231"/>
    </location>
</feature>
<feature type="helix" evidence="10">
    <location>
        <begin position="233"/>
        <end position="238"/>
    </location>
</feature>
<feature type="helix" evidence="10">
    <location>
        <begin position="242"/>
        <end position="254"/>
    </location>
</feature>
<feature type="helix" evidence="10">
    <location>
        <begin position="261"/>
        <end position="297"/>
    </location>
</feature>
<feature type="helix" evidence="10">
    <location>
        <begin position="300"/>
        <end position="327"/>
    </location>
</feature>
<feature type="helix" evidence="10">
    <location>
        <begin position="329"/>
        <end position="337"/>
    </location>
</feature>
<feature type="helix" evidence="10">
    <location>
        <begin position="344"/>
        <end position="358"/>
    </location>
</feature>
<feature type="helix" evidence="10">
    <location>
        <begin position="361"/>
        <end position="375"/>
    </location>
</feature>
<feature type="turn" evidence="10">
    <location>
        <begin position="376"/>
        <end position="378"/>
    </location>
</feature>
<feature type="helix" evidence="10">
    <location>
        <begin position="381"/>
        <end position="405"/>
    </location>
</feature>
<feature type="helix" evidence="10">
    <location>
        <begin position="407"/>
        <end position="431"/>
    </location>
</feature>
<feature type="helix" evidence="10">
    <location>
        <begin position="441"/>
        <end position="465"/>
    </location>
</feature>
<feature type="helix" evidence="10">
    <location>
        <begin position="474"/>
        <end position="498"/>
    </location>
</feature>
<feature type="helix" evidence="10">
    <location>
        <begin position="503"/>
        <end position="506"/>
    </location>
</feature>
<dbReference type="EMBL" id="U00096">
    <property type="protein sequence ID" value="AAC74153.1"/>
    <property type="molecule type" value="Genomic_DNA"/>
</dbReference>
<dbReference type="EMBL" id="AP009048">
    <property type="protein sequence ID" value="BAA35877.1"/>
    <property type="molecule type" value="Genomic_DNA"/>
</dbReference>
<dbReference type="PIR" id="B64850">
    <property type="entry name" value="B64850"/>
</dbReference>
<dbReference type="RefSeq" id="NP_415587.1">
    <property type="nucleotide sequence ID" value="NC_000913.3"/>
</dbReference>
<dbReference type="RefSeq" id="WP_001050683.1">
    <property type="nucleotide sequence ID" value="NZ_SSZK01000053.1"/>
</dbReference>
<dbReference type="PDB" id="6CC4">
    <property type="method" value="X-ray"/>
    <property type="resolution" value="3.50 A"/>
    <property type="chains" value="A=4-511"/>
</dbReference>
<dbReference type="PDB" id="7WAG">
    <property type="method" value="X-ray"/>
    <property type="resolution" value="2.55 A"/>
    <property type="chains" value="A=2-511"/>
</dbReference>
<dbReference type="PDBsum" id="6CC4"/>
<dbReference type="PDBsum" id="7WAG"/>
<dbReference type="SMR" id="P0AF16"/>
<dbReference type="BioGRID" id="4260079">
    <property type="interactions" value="317"/>
</dbReference>
<dbReference type="FunCoup" id="P0AF16">
    <property type="interactions" value="521"/>
</dbReference>
<dbReference type="IntAct" id="P0AF16">
    <property type="interactions" value="1"/>
</dbReference>
<dbReference type="STRING" id="511145.b1069"/>
<dbReference type="TCDB" id="2.A.66.4.3">
    <property type="family name" value="the multidrug/oligosaccharidyl-lipid/polysaccharide (mop) flippase superfamily"/>
</dbReference>
<dbReference type="PaxDb" id="511145-b1069"/>
<dbReference type="EnsemblBacteria" id="AAC74153">
    <property type="protein sequence ID" value="AAC74153"/>
    <property type="gene ID" value="b1069"/>
</dbReference>
<dbReference type="GeneID" id="75203656"/>
<dbReference type="GeneID" id="945487"/>
<dbReference type="KEGG" id="ecj:JW1056"/>
<dbReference type="KEGG" id="eco:b1069"/>
<dbReference type="KEGG" id="ecoc:C3026_06490"/>
<dbReference type="PATRIC" id="fig|1411691.4.peg.1199"/>
<dbReference type="EchoBASE" id="EB3639"/>
<dbReference type="eggNOG" id="COG0728">
    <property type="taxonomic scope" value="Bacteria"/>
</dbReference>
<dbReference type="HOGENOM" id="CLU_006797_5_3_6"/>
<dbReference type="InParanoid" id="P0AF16"/>
<dbReference type="OMA" id="INFWYLL"/>
<dbReference type="OrthoDB" id="9816572at2"/>
<dbReference type="PhylomeDB" id="P0AF16"/>
<dbReference type="BioCyc" id="EcoCyc:G6561-MONOMER"/>
<dbReference type="BioCyc" id="MetaCyc:G6561-MONOMER"/>
<dbReference type="UniPathway" id="UPA00219"/>
<dbReference type="PRO" id="PR:P0AF16"/>
<dbReference type="Proteomes" id="UP000000625">
    <property type="component" value="Chromosome"/>
</dbReference>
<dbReference type="GO" id="GO:0000935">
    <property type="term" value="C:division septum"/>
    <property type="evidence" value="ECO:0000314"/>
    <property type="project" value="EcoCyc"/>
</dbReference>
<dbReference type="GO" id="GO:0005886">
    <property type="term" value="C:plasma membrane"/>
    <property type="evidence" value="ECO:0000314"/>
    <property type="project" value="EcoCyc"/>
</dbReference>
<dbReference type="GO" id="GO:1901612">
    <property type="term" value="F:cardiolipin binding"/>
    <property type="evidence" value="ECO:0000314"/>
    <property type="project" value="EcoCyc"/>
</dbReference>
<dbReference type="GO" id="GO:0015648">
    <property type="term" value="F:lipid-linked peptidoglycan transporter activity"/>
    <property type="evidence" value="ECO:0000314"/>
    <property type="project" value="EcoCyc"/>
</dbReference>
<dbReference type="GO" id="GO:0071555">
    <property type="term" value="P:cell wall organization"/>
    <property type="evidence" value="ECO:0007669"/>
    <property type="project" value="UniProtKB-KW"/>
</dbReference>
<dbReference type="GO" id="GO:0034203">
    <property type="term" value="P:glycolipid translocation"/>
    <property type="evidence" value="ECO:0000315"/>
    <property type="project" value="CACAO"/>
</dbReference>
<dbReference type="GO" id="GO:0034204">
    <property type="term" value="P:lipid translocation"/>
    <property type="evidence" value="ECO:0000318"/>
    <property type="project" value="GO_Central"/>
</dbReference>
<dbReference type="GO" id="GO:0015836">
    <property type="term" value="P:lipid-linked peptidoglycan transport"/>
    <property type="evidence" value="ECO:0000314"/>
    <property type="project" value="EcoCyc"/>
</dbReference>
<dbReference type="GO" id="GO:0009252">
    <property type="term" value="P:peptidoglycan biosynthetic process"/>
    <property type="evidence" value="ECO:0000315"/>
    <property type="project" value="EcoCyc"/>
</dbReference>
<dbReference type="GO" id="GO:0008360">
    <property type="term" value="P:regulation of cell shape"/>
    <property type="evidence" value="ECO:0007669"/>
    <property type="project" value="UniProtKB-KW"/>
</dbReference>
<dbReference type="CDD" id="cd13123">
    <property type="entry name" value="MATE_MurJ_like"/>
    <property type="match status" value="1"/>
</dbReference>
<dbReference type="HAMAP" id="MF_02078">
    <property type="entry name" value="MurJ_MviN"/>
    <property type="match status" value="1"/>
</dbReference>
<dbReference type="InterPro" id="IPR051050">
    <property type="entry name" value="Lipid_II_flippase_MurJ/MviN"/>
</dbReference>
<dbReference type="InterPro" id="IPR004268">
    <property type="entry name" value="MurJ"/>
</dbReference>
<dbReference type="NCBIfam" id="TIGR01695">
    <property type="entry name" value="murJ_mviN"/>
    <property type="match status" value="1"/>
</dbReference>
<dbReference type="PANTHER" id="PTHR47019">
    <property type="entry name" value="LIPID II FLIPPASE MURJ"/>
    <property type="match status" value="1"/>
</dbReference>
<dbReference type="PANTHER" id="PTHR47019:SF1">
    <property type="entry name" value="LIPID II FLIPPASE MURJ"/>
    <property type="match status" value="1"/>
</dbReference>
<dbReference type="Pfam" id="PF03023">
    <property type="entry name" value="MurJ"/>
    <property type="match status" value="1"/>
</dbReference>
<dbReference type="PIRSF" id="PIRSF002869">
    <property type="entry name" value="MviN"/>
    <property type="match status" value="1"/>
</dbReference>
<dbReference type="PRINTS" id="PR01806">
    <property type="entry name" value="VIRFACTRMVIN"/>
</dbReference>
<gene>
    <name evidence="2 8" type="primary">murJ</name>
    <name type="synonym">mviN</name>
    <name type="synonym">yceN</name>
    <name type="ordered locus">b1069</name>
    <name type="ordered locus">JW1056</name>
</gene>
<keyword id="KW-0002">3D-structure</keyword>
<keyword id="KW-0997">Cell inner membrane</keyword>
<keyword id="KW-1003">Cell membrane</keyword>
<keyword id="KW-0133">Cell shape</keyword>
<keyword id="KW-0961">Cell wall biogenesis/degradation</keyword>
<keyword id="KW-0472">Membrane</keyword>
<keyword id="KW-0573">Peptidoglycan synthesis</keyword>
<keyword id="KW-1185">Reference proteome</keyword>
<keyword id="KW-0812">Transmembrane</keyword>
<keyword id="KW-1133">Transmembrane helix</keyword>
<keyword id="KW-0813">Transport</keyword>
<proteinExistence type="evidence at protein level"/>
<protein>
    <recommendedName>
        <fullName evidence="9">Lipid II flippase MurJ</fullName>
    </recommendedName>
    <alternativeName>
        <fullName evidence="9">Peptidoglycan biosynthesis protein MurJ</fullName>
    </alternativeName>
</protein>
<evidence type="ECO:0000255" key="1"/>
<evidence type="ECO:0000255" key="2">
    <source>
        <dbReference type="HAMAP-Rule" id="MF_02078"/>
    </source>
</evidence>
<evidence type="ECO:0000269" key="3">
    <source>
    </source>
</evidence>
<evidence type="ECO:0000269" key="4">
    <source>
    </source>
</evidence>
<evidence type="ECO:0000269" key="5">
    <source>
    </source>
</evidence>
<evidence type="ECO:0000269" key="6">
    <source>
    </source>
</evidence>
<evidence type="ECO:0000269" key="7">
    <source>
    </source>
</evidence>
<evidence type="ECO:0000303" key="8">
    <source>
    </source>
</evidence>
<evidence type="ECO:0000305" key="9"/>
<evidence type="ECO:0007829" key="10">
    <source>
        <dbReference type="PDB" id="7WAG"/>
    </source>
</evidence>
<accession>P0AF16</accession>
<accession>P75932</accession>
<sequence>MNLLKSLAAVSSMTMFSRVLGFARDAIVARIFGAGMATDAFFVAFKLPNLLRRIFAEGAFSQAFVPILAEYKSKQGEDATRVFVSYVSGLLTLALAVVTVAGMLAAPWVIMVTAPGFADTADKFALTSQLLKITFPYILLISLASLVGAILNTWNRFSIPAFAPTLLNISMIGFALFAAPYFNPPVLALAWAVTVGGVLQLVYQLPHLKKIGMLVLPRINFHDAGAMRVVKQMGPAILGVSVSQISLIINTIFASFLASGSVSWMYYADRLMEFPSGVLGVALGTILLPSLSKSFASGNHDEYNRLMDWGLRLCFLLALPSAVALGILSGPLTVSLFQYGKFTAFDALMTQRALIAYSVGLIGLIVVKVLAPGFYSRQDIKTPVKIAIVTLILTQLMNLAFIGPLKHAGLSLSIGLAACLNASLLYWQLRKQKIFTPQPGWMAFLLRLVVAVLVMSGVLLGMLHIMPEWSLGTMPWRLLRLMAVVLAGIAAYFAALAVLGFKVKEFARRTV</sequence>
<name>MURJ_ECOLI</name>